<protein>
    <recommendedName>
        <fullName>EPS I polysaccharide export inner membrane protein EpsE</fullName>
    </recommendedName>
</protein>
<feature type="chain" id="PRO_0000086998" description="EPS I polysaccharide export inner membrane protein EpsE">
    <location>
        <begin position="1"/>
        <end position="436"/>
    </location>
</feature>
<feature type="transmembrane region" description="Helical" evidence="1">
    <location>
        <begin position="20"/>
        <end position="40"/>
    </location>
</feature>
<feature type="transmembrane region" description="Helical" evidence="1">
    <location>
        <begin position="49"/>
        <end position="69"/>
    </location>
</feature>
<feature type="transmembrane region" description="Helical" evidence="1">
    <location>
        <begin position="91"/>
        <end position="111"/>
    </location>
</feature>
<feature type="transmembrane region" description="Helical" evidence="1">
    <location>
        <begin position="133"/>
        <end position="153"/>
    </location>
</feature>
<feature type="transmembrane region" description="Helical" evidence="1">
    <location>
        <begin position="160"/>
        <end position="180"/>
    </location>
</feature>
<feature type="transmembrane region" description="Helical" evidence="1">
    <location>
        <begin position="185"/>
        <end position="205"/>
    </location>
</feature>
<feature type="transmembrane region" description="Helical" evidence="1">
    <location>
        <begin position="234"/>
        <end position="254"/>
    </location>
</feature>
<feature type="transmembrane region" description="Helical" evidence="1">
    <location>
        <begin position="261"/>
        <end position="281"/>
    </location>
</feature>
<feature type="transmembrane region" description="Helical" evidence="1">
    <location>
        <begin position="307"/>
        <end position="327"/>
    </location>
</feature>
<feature type="transmembrane region" description="Helical" evidence="1">
    <location>
        <begin position="341"/>
        <end position="361"/>
    </location>
</feature>
<feature type="transmembrane region" description="Helical" evidence="1">
    <location>
        <begin position="375"/>
        <end position="395"/>
    </location>
</feature>
<feature type="transmembrane region" description="Helical" evidence="1">
    <location>
        <begin position="396"/>
        <end position="416"/>
    </location>
</feature>
<evidence type="ECO:0000255" key="1"/>
<evidence type="ECO:0000305" key="2"/>
<reference key="1">
    <citation type="journal article" date="1995" name="Mol. Microbiol.">
        <title>Molecular characterization of the eps gene cluster of Pseudomonas solanacearum and its transcriptional regulation at a single promoter.</title>
        <authorList>
            <person name="Huang J."/>
            <person name="Schell M."/>
        </authorList>
    </citation>
    <scope>NUCLEOTIDE SEQUENCE [GENOMIC DNA]</scope>
    <source>
        <strain>AW</strain>
    </source>
</reference>
<comment type="function">
    <text>Probably involved in polymerization and/or export of exopolysaccharide EPS I which functions as a virulence factor. May play a role in export of EPS I or its intermediates across the membranes.</text>
</comment>
<comment type="subcellular location">
    <subcellularLocation>
        <location evidence="2">Cell inner membrane</location>
        <topology evidence="2">Multi-pass membrane protein</topology>
    </subcellularLocation>
</comment>
<comment type="similarity">
    <text evidence="2">To E.coli bicyclomycin resistance protein (BCR).</text>
</comment>
<dbReference type="EMBL" id="U17898">
    <property type="protein sequence ID" value="AAA91628.1"/>
    <property type="molecule type" value="Genomic_DNA"/>
</dbReference>
<dbReference type="PIR" id="S77639">
    <property type="entry name" value="S77639"/>
</dbReference>
<dbReference type="SMR" id="Q45411"/>
<dbReference type="TCDB" id="2.A.66.2.11">
    <property type="family name" value="the multidrug/oligosaccharidyl-lipid/polysaccharide (mop) flippase superfamily"/>
</dbReference>
<dbReference type="GO" id="GO:0005886">
    <property type="term" value="C:plasma membrane"/>
    <property type="evidence" value="ECO:0007669"/>
    <property type="project" value="UniProtKB-SubCell"/>
</dbReference>
<dbReference type="GO" id="GO:0015774">
    <property type="term" value="P:polysaccharide transport"/>
    <property type="evidence" value="ECO:0007669"/>
    <property type="project" value="UniProtKB-KW"/>
</dbReference>
<dbReference type="InterPro" id="IPR050833">
    <property type="entry name" value="Poly_Biosynth_Transport"/>
</dbReference>
<dbReference type="PANTHER" id="PTHR30250:SF11">
    <property type="entry name" value="O-ANTIGEN TRANSPORTER-RELATED"/>
    <property type="match status" value="1"/>
</dbReference>
<dbReference type="PANTHER" id="PTHR30250">
    <property type="entry name" value="PST FAMILY PREDICTED COLANIC ACID TRANSPORTER"/>
    <property type="match status" value="1"/>
</dbReference>
<keyword id="KW-0997">Cell inner membrane</keyword>
<keyword id="KW-1003">Cell membrane</keyword>
<keyword id="KW-0472">Membrane</keyword>
<keyword id="KW-0625">Polysaccharide transport</keyword>
<keyword id="KW-0762">Sugar transport</keyword>
<keyword id="KW-0812">Transmembrane</keyword>
<keyword id="KW-1133">Transmembrane helix</keyword>
<keyword id="KW-0813">Transport</keyword>
<keyword id="KW-0843">Virulence</keyword>
<gene>
    <name type="primary">epsE</name>
</gene>
<name>EPSE_RALSL</name>
<proteinExistence type="predicted"/>
<sequence length="436" mass="45766">MQKTAPRPLPARISFLSASVLGLGAAVASRGAVFVSNILLAHSLTVHDFGLFSYAYVTALNLGLFLATGVSQAAGHVLPLIENPERKRTQLCAFIVLLMALIAVAAAALYLSSASISVAAFGSEQGSGALRMAAIVLIATAFTQALQSFQYAMHEHRSSATISIGAAVLLLTMLWAMGPIRQPALALTIFLAVNAGAAVSQLLVLARATPSQRGPWRTGREELRLAVKHALPSVLTTSMGAPVHWICLSMLAAMTDGAHQLALFSVAFQWYIAITFIPATLGNLALPFLARHAGATETTVRQRFRSALLFGGGLSLALGCASFLLAGEIFAWFYPAEYGSAASSMRSLSVAAALCGVSVLLQQRIAAAGKFWRNFAMAAVYSVIYVAASYLALRLGFGATSIGLAMSAAYCCLILFQTLTLQGDSGAAIRLGRSFS</sequence>
<organism>
    <name type="scientific">Ralstonia solanacearum</name>
    <name type="common">Pseudomonas solanacearum</name>
    <dbReference type="NCBI Taxonomy" id="305"/>
    <lineage>
        <taxon>Bacteria</taxon>
        <taxon>Pseudomonadati</taxon>
        <taxon>Pseudomonadota</taxon>
        <taxon>Betaproteobacteria</taxon>
        <taxon>Burkholderiales</taxon>
        <taxon>Burkholderiaceae</taxon>
        <taxon>Ralstonia</taxon>
        <taxon>Ralstonia solanacearum species complex</taxon>
    </lineage>
</organism>
<accession>Q45411</accession>